<gene>
    <name evidence="4 11 13" type="primary">IGHV3-38-3</name>
    <name evidence="8" type="synonym">IGHV3-D</name>
</gene>
<organism>
    <name type="scientific">Homo sapiens</name>
    <name type="common">Human</name>
    <dbReference type="NCBI Taxonomy" id="9606"/>
    <lineage>
        <taxon>Eukaryota</taxon>
        <taxon>Metazoa</taxon>
        <taxon>Chordata</taxon>
        <taxon>Craniata</taxon>
        <taxon>Vertebrata</taxon>
        <taxon>Euteleostomi</taxon>
        <taxon>Mammalia</taxon>
        <taxon>Eutheria</taxon>
        <taxon>Euarchontoglires</taxon>
        <taxon>Primates</taxon>
        <taxon>Haplorrhini</taxon>
        <taxon>Catarrhini</taxon>
        <taxon>Hominidae</taxon>
        <taxon>Homo</taxon>
    </lineage>
</organism>
<name>HV383_HUMAN</name>
<evidence type="ECO:0000250" key="1">
    <source>
        <dbReference type="UniProtKB" id="P23083"/>
    </source>
</evidence>
<evidence type="ECO:0000255" key="2"/>
<evidence type="ECO:0000255" key="3">
    <source>
        <dbReference type="PROSITE-ProRule" id="PRU00114"/>
    </source>
</evidence>
<evidence type="ECO:0000303" key="4">
    <source>
    </source>
</evidence>
<evidence type="ECO:0000303" key="5">
    <source>
    </source>
</evidence>
<evidence type="ECO:0000303" key="6">
    <source>
    </source>
</evidence>
<evidence type="ECO:0000303" key="7">
    <source>
    </source>
</evidence>
<evidence type="ECO:0000303" key="8">
    <source>
    </source>
</evidence>
<evidence type="ECO:0000303" key="9">
    <source>
    </source>
</evidence>
<evidence type="ECO:0000303" key="10">
    <source>
    </source>
</evidence>
<evidence type="ECO:0000303" key="11">
    <source ref="4"/>
</evidence>
<evidence type="ECO:0000305" key="12"/>
<evidence type="ECO:0000312" key="13">
    <source>
        <dbReference type="HGNC" id="HGNC:5629"/>
    </source>
</evidence>
<sequence>MQFVLSWVFLVAILKGVQCEVQLVESRGVLVQPGGSLRLSCAASGFTVSSNEMSWVRQAPGKGLEWVSSISGGSTYYADSRKGRFTISRDNSKNTLHLQMNSLRAEDTAVYYCKK</sequence>
<accession>P0DTE1</accession>
<reference key="1">
    <citation type="journal article" date="2013" name="Am. J. Hum. Genet.">
        <title>Complete haplotype sequence of the human immunoglobulin heavy-chain variable, diversity, and joining genes and characterization of allelic and copy-number variation.</title>
        <authorList>
            <person name="Watson C.T."/>
            <person name="Steinberg K.M."/>
            <person name="Huddleston J."/>
            <person name="Warren R.L."/>
            <person name="Malig M."/>
            <person name="Schein J."/>
            <person name="Willsey A.J."/>
            <person name="Joy J.B."/>
            <person name="Scott J.K."/>
            <person name="Graves T.A."/>
            <person name="Wilson R.K."/>
            <person name="Holt R.A."/>
            <person name="Eichler E.E."/>
            <person name="Breden F."/>
        </authorList>
    </citation>
    <scope>NUCLEOTIDE SEQUENCE [GENOMIC DNA] (IMGT ALLELE IGHV3-38-3*01)</scope>
</reference>
<reference key="2">
    <citation type="journal article" date="1998" name="Exp. Clin. Immunogenet.">
        <title>IMGT (ImMunoGeneTics) locus on focus. A new section of Experimental and Clinical Immunogenetics.</title>
        <authorList>
            <person name="Lefranc M.P."/>
        </authorList>
    </citation>
    <scope>CHARACTERIZATION</scope>
</reference>
<reference key="3">
    <citation type="journal article" date="2001" name="Exp. Clin. Immunogenet.">
        <title>Nomenclature of the human immunoglobulin heavy (IGH) genes.</title>
        <authorList>
            <person name="Lefranc M.P."/>
        </authorList>
    </citation>
    <scope>NOMENCLATURE</scope>
</reference>
<reference key="4">
    <citation type="book" date="2001" name="The Immunoglobulin FactsBook.">
        <title>The Immunoglobulin FactsBook.</title>
        <editorList>
            <person name="Lefranc M.P."/>
            <person name="Lefranc G."/>
        </editorList>
        <authorList>
            <person name="Lefranc M.P."/>
            <person name="Lefranc G."/>
        </authorList>
    </citation>
    <scope>NOMENCLATURE</scope>
</reference>
<reference key="5">
    <citation type="journal article" date="2007" name="Annu. Rev. Genet.">
        <title>Immunoglobulin somatic hypermutation.</title>
        <authorList>
            <person name="Teng G."/>
            <person name="Papavasiliou F.N."/>
        </authorList>
    </citation>
    <scope>REVIEW ON SOMATIC HYPERMUTATION</scope>
</reference>
<reference key="6">
    <citation type="journal article" date="2010" name="J. Allergy Clin. Immunol.">
        <title>Structure and function of immunoglobulins.</title>
        <authorList>
            <person name="Schroeder H.W. Jr."/>
            <person name="Cavacini L."/>
        </authorList>
    </citation>
    <scope>REVIEW ON IMMUNOGLOBULINS</scope>
</reference>
<reference key="7">
    <citation type="journal article" date="2012" name="Nat. Rev. Immunol.">
        <title>Molecular programming of B cell memory.</title>
        <authorList>
            <person name="McHeyzer-Williams M."/>
            <person name="Okitsu S."/>
            <person name="Wang N."/>
            <person name="McHeyzer-Williams L."/>
        </authorList>
    </citation>
    <scope>REVIEW ON FUNCTION</scope>
</reference>
<reference key="8">
    <citation type="journal article" date="2014" name="Front. Immunol.">
        <title>Immunoglobulin and T Cell Receptor Genes: IMGT((R)) and the Birth and Rise of Immunoinformatics.</title>
        <authorList>
            <person name="Lefranc M.P."/>
        </authorList>
    </citation>
    <scope>NOMENCLATURE</scope>
</reference>
<comment type="function">
    <text evidence="5 6 7 9 10">Probable non-functional open reading frame (ORF) of V region of the variable domain of immunoglobulin heavy chains (PubMed:24600447). Non-functional ORF generally cannot participate in the synthesis of a productive immunoglobulin chain due to altered V-(D)-J or switch recombination and/or splicing site (at mRNA level) and/or conserved amino acid change (protein level) (PubMed:9619395). Immunoglobulins, also known as antibodies, are membrane-bound or secreted glycoproteins produced by B lymphocytes. In the recognition phase of humoral immunity, the membrane-bound immunoglobulins serve as receptors which, upon binding of a specific antigen, trigger the clonal expansion and differentiation of B lymphocytes into immunoglobulins-secreting plasma cells. Secreted immunoglobulins mediate the effector phase of humoral immunity, which results in the elimination of bound antigens (PubMed:20176268, PubMed:22158414). The antigen binding site is formed by the variable domain of one heavy chain, together with that of its associated light chain. Thus, each immunoglobulin has two antigen binding sites with remarkable affinity for a particular antigen. The variable domains are assembled by a process called V-(D)-J rearrangement and can then be subjected to somatic hypermutations which, after exposure to antigen and selection, allow affinity maturation for a particular antigen (PubMed:17576170, PubMed:20176268, PubMed:22158414, PubMed:24600447).</text>
</comment>
<comment type="subunit">
    <text evidence="6">Immunoglobulins are composed of two identical heavy chains and two identical light chains; disulfide-linked.</text>
</comment>
<comment type="subcellular location">
    <subcellularLocation>
        <location evidence="6 7">Secreted</location>
    </subcellularLocation>
    <subcellularLocation>
        <location evidence="6 7">Cell membrane</location>
    </subcellularLocation>
</comment>
<comment type="polymorphism">
    <text evidence="12">There are several alleles. The sequence shown is that of IMGT allele IGHV3-38-3*01.</text>
</comment>
<comment type="caution">
    <text evidence="10 12">Most probably a non-functional protein that cannot participate to the synthesis of a productive immunoglobulin chain due to an altered splicing site (PubMed:9619395). Watson et al (PubMed:23541343) identified this gene on chromosome 14. However, it is not currently present on the reference genome assembly (GRCh38/hg38).</text>
</comment>
<keyword id="KW-1064">Adaptive immunity</keyword>
<keyword id="KW-1003">Cell membrane</keyword>
<keyword id="KW-1015">Disulfide bond</keyword>
<keyword id="KW-0391">Immunity</keyword>
<keyword id="KW-1280">Immunoglobulin</keyword>
<keyword id="KW-0393">Immunoglobulin domain</keyword>
<keyword id="KW-0472">Membrane</keyword>
<keyword id="KW-1267">Proteomics identification</keyword>
<keyword id="KW-1185">Reference proteome</keyword>
<keyword id="KW-0964">Secreted</keyword>
<keyword id="KW-0732">Signal</keyword>
<dbReference type="EMBL" id="KF698732">
    <property type="status" value="NOT_ANNOTATED_CDS"/>
    <property type="molecule type" value="Genomic_DNA"/>
</dbReference>
<dbReference type="SMR" id="P0DTE1"/>
<dbReference type="FunCoup" id="P0DTE1">
    <property type="interactions" value="274"/>
</dbReference>
<dbReference type="MassIVE" id="P0DTE1"/>
<dbReference type="AGR" id="HGNC:5629"/>
<dbReference type="GeneCards" id="IGHV3-38-3"/>
<dbReference type="HGNC" id="HGNC:5629">
    <property type="gene designation" value="IGHV3-38-3"/>
</dbReference>
<dbReference type="neXtProt" id="NX_P0DTE1"/>
<dbReference type="InParanoid" id="P0DTE1"/>
<dbReference type="PRO" id="PR:P0DTE1"/>
<dbReference type="Proteomes" id="UP000005640">
    <property type="component" value="Unplaced"/>
</dbReference>
<dbReference type="GO" id="GO:0005576">
    <property type="term" value="C:extracellular region"/>
    <property type="evidence" value="ECO:0007669"/>
    <property type="project" value="UniProtKB-SubCell"/>
</dbReference>
<dbReference type="GO" id="GO:0019814">
    <property type="term" value="C:immunoglobulin complex"/>
    <property type="evidence" value="ECO:0007669"/>
    <property type="project" value="UniProtKB-KW"/>
</dbReference>
<dbReference type="GO" id="GO:0005886">
    <property type="term" value="C:plasma membrane"/>
    <property type="evidence" value="ECO:0007669"/>
    <property type="project" value="UniProtKB-SubCell"/>
</dbReference>
<dbReference type="GO" id="GO:0003823">
    <property type="term" value="F:antigen binding"/>
    <property type="evidence" value="ECO:0000318"/>
    <property type="project" value="GO_Central"/>
</dbReference>
<dbReference type="GO" id="GO:0016064">
    <property type="term" value="P:immunoglobulin mediated immune response"/>
    <property type="evidence" value="ECO:0000318"/>
    <property type="project" value="GO_Central"/>
</dbReference>
<dbReference type="FunFam" id="2.60.40.10:FF:001259">
    <property type="entry name" value="Immunoglobulin heavy variable 13-2"/>
    <property type="match status" value="1"/>
</dbReference>
<dbReference type="Gene3D" id="2.60.40.10">
    <property type="entry name" value="Immunoglobulins"/>
    <property type="match status" value="1"/>
</dbReference>
<dbReference type="InterPro" id="IPR007110">
    <property type="entry name" value="Ig-like_dom"/>
</dbReference>
<dbReference type="InterPro" id="IPR036179">
    <property type="entry name" value="Ig-like_dom_sf"/>
</dbReference>
<dbReference type="InterPro" id="IPR013783">
    <property type="entry name" value="Ig-like_fold"/>
</dbReference>
<dbReference type="InterPro" id="IPR013106">
    <property type="entry name" value="Ig_V-set"/>
</dbReference>
<dbReference type="InterPro" id="IPR050199">
    <property type="entry name" value="IgHV"/>
</dbReference>
<dbReference type="PANTHER" id="PTHR23266">
    <property type="entry name" value="IMMUNOGLOBULIN HEAVY CHAIN"/>
    <property type="match status" value="1"/>
</dbReference>
<dbReference type="Pfam" id="PF07686">
    <property type="entry name" value="V-set"/>
    <property type="match status" value="1"/>
</dbReference>
<dbReference type="SMART" id="SM00406">
    <property type="entry name" value="IGv"/>
    <property type="match status" value="1"/>
</dbReference>
<dbReference type="SUPFAM" id="SSF48726">
    <property type="entry name" value="Immunoglobulin"/>
    <property type="match status" value="1"/>
</dbReference>
<dbReference type="PROSITE" id="PS50835">
    <property type="entry name" value="IG_LIKE"/>
    <property type="match status" value="1"/>
</dbReference>
<proteinExistence type="evidence at protein level"/>
<feature type="signal peptide" evidence="2">
    <location>
        <begin position="1"/>
        <end position="19"/>
    </location>
</feature>
<feature type="chain" id="PRO_0000450573" description="Probable non-functional immunoglobulin heavy variable 3-38-3" evidence="2">
    <location>
        <begin position="20"/>
        <end position="115"/>
    </location>
</feature>
<feature type="domain" description="Ig-like" evidence="3">
    <location>
        <begin position="31"/>
        <end position="115" status="greater than"/>
    </location>
</feature>
<feature type="region of interest" description="Framework-1" evidence="1">
    <location>
        <begin position="20"/>
        <end position="44"/>
    </location>
</feature>
<feature type="region of interest" description="Complementarity-determining-1" evidence="1">
    <location>
        <begin position="45"/>
        <end position="52"/>
    </location>
</feature>
<feature type="region of interest" description="Framework-2" evidence="1">
    <location>
        <begin position="53"/>
        <end position="69"/>
    </location>
</feature>
<feature type="region of interest" description="Complementarity-determining-2" evidence="1">
    <location>
        <begin position="70"/>
        <end position="75"/>
    </location>
</feature>
<feature type="region of interest" description="Framework-3" evidence="1">
    <location>
        <begin position="76"/>
        <end position="113"/>
    </location>
</feature>
<feature type="region of interest" description="Complementarity-determining-3" evidence="1">
    <location>
        <begin position="114"/>
        <end position="115" status="greater than"/>
    </location>
</feature>
<feature type="disulfide bond" evidence="3">
    <location>
        <begin position="41"/>
        <end position="113"/>
    </location>
</feature>
<feature type="non-terminal residue">
    <location>
        <position position="115"/>
    </location>
</feature>
<protein>
    <recommendedName>
        <fullName evidence="12">Probable non-functional immunoglobulin heavy variable 3-38-3</fullName>
    </recommendedName>
</protein>